<proteinExistence type="evidence at protein level"/>
<organism>
    <name type="scientific">Salmonella typhimurium (strain LT2 / SGSC1412 / ATCC 700720)</name>
    <dbReference type="NCBI Taxonomy" id="99287"/>
    <lineage>
        <taxon>Bacteria</taxon>
        <taxon>Pseudomonadati</taxon>
        <taxon>Pseudomonadota</taxon>
        <taxon>Gammaproteobacteria</taxon>
        <taxon>Enterobacterales</taxon>
        <taxon>Enterobacteriaceae</taxon>
        <taxon>Salmonella</taxon>
    </lineage>
</organism>
<dbReference type="EMBL" id="AF308568">
    <property type="protein sequence ID" value="AAG40855.1"/>
    <property type="molecule type" value="Genomic_DNA"/>
</dbReference>
<dbReference type="EMBL" id="AE006468">
    <property type="protein sequence ID" value="AAL20574.1"/>
    <property type="molecule type" value="Genomic_DNA"/>
</dbReference>
<dbReference type="RefSeq" id="NP_460615.1">
    <property type="nucleotide sequence ID" value="NC_003197.2"/>
</dbReference>
<dbReference type="RefSeq" id="WP_000387373.1">
    <property type="nucleotide sequence ID" value="NC_003197.2"/>
</dbReference>
<dbReference type="PDB" id="3NVO">
    <property type="method" value="X-ray"/>
    <property type="resolution" value="2.30 A"/>
    <property type="chains" value="A/B=1-262"/>
</dbReference>
<dbReference type="PDB" id="3NWI">
    <property type="method" value="X-ray"/>
    <property type="resolution" value="3.13 A"/>
    <property type="chains" value="A/B/C/D/E=1-262"/>
</dbReference>
<dbReference type="PDBsum" id="3NVO"/>
<dbReference type="PDBsum" id="3NWI"/>
<dbReference type="SMR" id="Q9EYX5"/>
<dbReference type="DIP" id="DIP-59134N"/>
<dbReference type="STRING" id="99287.STM1656"/>
<dbReference type="TCDB" id="1.A.35.4.1">
    <property type="family name" value="the cora metal ion transporter (mit) family"/>
</dbReference>
<dbReference type="PaxDb" id="99287-STM1656"/>
<dbReference type="GeneID" id="1253174"/>
<dbReference type="KEGG" id="stm:STM1656"/>
<dbReference type="PATRIC" id="fig|99287.12.peg.1750"/>
<dbReference type="HOGENOM" id="CLU_007127_2_0_6"/>
<dbReference type="OMA" id="MVSVRIF"/>
<dbReference type="PhylomeDB" id="Q9EYX5"/>
<dbReference type="BioCyc" id="SENT99287:STM1656-MONOMER"/>
<dbReference type="EvolutionaryTrace" id="Q9EYX5"/>
<dbReference type="Proteomes" id="UP000001014">
    <property type="component" value="Chromosome"/>
</dbReference>
<dbReference type="GO" id="GO:0005886">
    <property type="term" value="C:plasma membrane"/>
    <property type="evidence" value="ECO:0000318"/>
    <property type="project" value="GO_Central"/>
</dbReference>
<dbReference type="GO" id="GO:0050897">
    <property type="term" value="F:cobalt ion binding"/>
    <property type="evidence" value="ECO:0000318"/>
    <property type="project" value="GO_Central"/>
</dbReference>
<dbReference type="GO" id="GO:0015087">
    <property type="term" value="F:cobalt ion transmembrane transporter activity"/>
    <property type="evidence" value="ECO:0000318"/>
    <property type="project" value="GO_Central"/>
</dbReference>
<dbReference type="GO" id="GO:0042802">
    <property type="term" value="F:identical protein binding"/>
    <property type="evidence" value="ECO:0000353"/>
    <property type="project" value="IntAct"/>
</dbReference>
<dbReference type="GO" id="GO:0000287">
    <property type="term" value="F:magnesium ion binding"/>
    <property type="evidence" value="ECO:0000318"/>
    <property type="project" value="GO_Central"/>
</dbReference>
<dbReference type="GO" id="GO:0015095">
    <property type="term" value="F:magnesium ion transmembrane transporter activity"/>
    <property type="evidence" value="ECO:0000318"/>
    <property type="project" value="GO_Central"/>
</dbReference>
<dbReference type="GO" id="GO:0005385">
    <property type="term" value="F:zinc ion transmembrane transporter activity"/>
    <property type="evidence" value="ECO:0007669"/>
    <property type="project" value="UniProtKB-UniRule"/>
</dbReference>
<dbReference type="CDD" id="cd12833">
    <property type="entry name" value="ZntB-like_1"/>
    <property type="match status" value="1"/>
</dbReference>
<dbReference type="FunFam" id="1.20.58.340:FF:000002">
    <property type="entry name" value="Zinc transport protein ZntB"/>
    <property type="match status" value="1"/>
</dbReference>
<dbReference type="FunFam" id="3.30.460.20:FF:000001">
    <property type="entry name" value="Zinc transport protein ZntB"/>
    <property type="match status" value="1"/>
</dbReference>
<dbReference type="Gene3D" id="3.30.460.20">
    <property type="entry name" value="CorA soluble domain-like"/>
    <property type="match status" value="1"/>
</dbReference>
<dbReference type="Gene3D" id="1.20.58.340">
    <property type="entry name" value="Magnesium transport protein CorA, transmembrane region"/>
    <property type="match status" value="2"/>
</dbReference>
<dbReference type="HAMAP" id="MF_01565">
    <property type="entry name" value="ZntB"/>
    <property type="match status" value="1"/>
</dbReference>
<dbReference type="InterPro" id="IPR045861">
    <property type="entry name" value="CorA_cytoplasmic_dom"/>
</dbReference>
<dbReference type="InterPro" id="IPR045863">
    <property type="entry name" value="CorA_TM1_TM2"/>
</dbReference>
<dbReference type="InterPro" id="IPR002523">
    <property type="entry name" value="MgTranspt_CorA/ZnTranspt_ZntB"/>
</dbReference>
<dbReference type="InterPro" id="IPR023714">
    <property type="entry name" value="Zn_transp_ZntB"/>
</dbReference>
<dbReference type="NCBIfam" id="NF007092">
    <property type="entry name" value="PRK09546.1"/>
    <property type="match status" value="1"/>
</dbReference>
<dbReference type="PANTHER" id="PTHR46494">
    <property type="entry name" value="CORA FAMILY METAL ION TRANSPORTER (EUROFUNG)"/>
    <property type="match status" value="1"/>
</dbReference>
<dbReference type="PANTHER" id="PTHR46494:SF3">
    <property type="entry name" value="ZINC TRANSPORT PROTEIN ZNTB"/>
    <property type="match status" value="1"/>
</dbReference>
<dbReference type="Pfam" id="PF01544">
    <property type="entry name" value="CorA"/>
    <property type="match status" value="1"/>
</dbReference>
<dbReference type="SUPFAM" id="SSF143865">
    <property type="entry name" value="CorA soluble domain-like"/>
    <property type="match status" value="1"/>
</dbReference>
<dbReference type="SUPFAM" id="SSF144083">
    <property type="entry name" value="Magnesium transport protein CorA, transmembrane region"/>
    <property type="match status" value="1"/>
</dbReference>
<evidence type="ECO:0000250" key="1">
    <source>
        <dbReference type="UniProtKB" id="P64423"/>
    </source>
</evidence>
<evidence type="ECO:0000255" key="2">
    <source>
        <dbReference type="HAMAP-Rule" id="MF_01565"/>
    </source>
</evidence>
<evidence type="ECO:0000269" key="3">
    <source>
    </source>
</evidence>
<evidence type="ECO:0000269" key="4">
    <source>
    </source>
</evidence>
<evidence type="ECO:0000269" key="5">
    <source>
    </source>
</evidence>
<evidence type="ECO:0000303" key="6">
    <source>
    </source>
</evidence>
<evidence type="ECO:0000305" key="7"/>
<evidence type="ECO:0007744" key="8">
    <source>
        <dbReference type="PDB" id="3NVO"/>
    </source>
</evidence>
<evidence type="ECO:0007744" key="9">
    <source>
        <dbReference type="PDB" id="3NWI"/>
    </source>
</evidence>
<evidence type="ECO:0007829" key="10">
    <source>
        <dbReference type="PDB" id="3NVO"/>
    </source>
</evidence>
<evidence type="ECO:0007829" key="11">
    <source>
        <dbReference type="PDB" id="3NWI"/>
    </source>
</evidence>
<name>ZNTB_SALTY</name>
<sequence>MEAIKGSDVNVPDAVFAWLLDGRGGVKPLEDNDVIDSQHPCWLHLNYTHPDSARWLASTPLLPNNVRDALAGESSRPRVSRMGEGTLITLRCINGSTDERPDQLVAMRLYMDERFIVSTRQRKVLALDDVVSDLQEGTGPVDCGGWLVDVCDALTDHASEFIEELHDKIIDLEDNLLDQQIPPRGFLALLRKQLIVMRRYMAPQRDVYARLASERLPWMSDDHRRRMQDIADRLGRGLDEIDACIARTGIMADEIAQVMQESLARRTYTMSLMAMVFLPSTFLTGLFGVNLGGIPGGGWRFGFSLFCILLVVLIGGVTLWLHRSKWL</sequence>
<feature type="chain" id="PRO_0000239247" description="Zinc transport protein ZntB">
    <location>
        <begin position="1"/>
        <end position="327"/>
    </location>
</feature>
<feature type="topological domain" description="Cytoplasmic" evidence="2 4">
    <location>
        <begin position="1"/>
        <end position="273"/>
    </location>
</feature>
<feature type="transmembrane region" description="Helical" evidence="2">
    <location>
        <begin position="274"/>
        <end position="294"/>
    </location>
</feature>
<feature type="topological domain" description="Periplasmic" evidence="2 4">
    <location>
        <begin position="295"/>
        <end position="300"/>
    </location>
</feature>
<feature type="transmembrane region" description="Helical" evidence="2">
    <location>
        <begin position="301"/>
        <end position="321"/>
    </location>
</feature>
<feature type="topological domain" description="Cytoplasmic" evidence="2 4">
    <location>
        <begin position="322"/>
        <end position="327"/>
    </location>
</feature>
<feature type="binding site" evidence="5 9">
    <location>
        <position position="92"/>
    </location>
    <ligand>
        <name>Zn(2+)</name>
        <dbReference type="ChEBI" id="CHEBI:29105"/>
        <label>1</label>
    </ligand>
</feature>
<feature type="binding site" evidence="5 9">
    <location>
        <position position="157"/>
    </location>
    <ligand>
        <name>Zn(2+)</name>
        <dbReference type="ChEBI" id="CHEBI:29105"/>
        <label>1</label>
    </ligand>
</feature>
<feature type="binding site" evidence="5 9">
    <location>
        <position position="166"/>
    </location>
    <ligand>
        <name>Zn(2+)</name>
        <dbReference type="ChEBI" id="CHEBI:29105"/>
        <label>2</label>
    </ligand>
</feature>
<feature type="binding site" evidence="5 9">
    <location>
        <position position="244"/>
    </location>
    <ligand>
        <name>Zn(2+)</name>
        <dbReference type="ChEBI" id="CHEBI:29105"/>
        <label>2</label>
    </ligand>
</feature>
<feature type="binding site" evidence="5">
    <location>
        <position position="307"/>
    </location>
    <ligand>
        <name>Zn(2+)</name>
        <dbReference type="ChEBI" id="CHEBI:29105"/>
        <label>3</label>
    </ligand>
</feature>
<feature type="mutagenesis site" description="Contains only two zinc binding sites." evidence="5">
    <original>C</original>
    <variation>S</variation>
    <location>
        <position position="92"/>
    </location>
</feature>
<feature type="mutagenesis site" description="Contains three zinc binding sites, but the third site shows a decreased affinity for zinc." evidence="5">
    <original>C</original>
    <variation>S</variation>
    <location>
        <position position="244"/>
    </location>
</feature>
<feature type="mutagenesis site" description="Contains only two zinc binding sites." evidence="5">
    <original>C</original>
    <variation>S</variation>
    <location>
        <position position="307"/>
    </location>
</feature>
<feature type="helix" evidence="10">
    <location>
        <begin position="6"/>
        <end position="9"/>
    </location>
</feature>
<feature type="strand" evidence="10">
    <location>
        <begin position="15"/>
        <end position="20"/>
    </location>
</feature>
<feature type="strand" evidence="10">
    <location>
        <begin position="22"/>
        <end position="24"/>
    </location>
</feature>
<feature type="strand" evidence="10">
    <location>
        <begin position="26"/>
        <end position="28"/>
    </location>
</feature>
<feature type="strand" evidence="11">
    <location>
        <begin position="34"/>
        <end position="39"/>
    </location>
</feature>
<feature type="strand" evidence="10">
    <location>
        <begin position="41"/>
        <end position="46"/>
    </location>
</feature>
<feature type="helix" evidence="10">
    <location>
        <begin position="50"/>
        <end position="58"/>
    </location>
</feature>
<feature type="turn" evidence="10">
    <location>
        <begin position="64"/>
        <end position="66"/>
    </location>
</feature>
<feature type="helix" evidence="10">
    <location>
        <begin position="67"/>
        <end position="70"/>
    </location>
</feature>
<feature type="turn" evidence="11">
    <location>
        <begin position="71"/>
        <end position="73"/>
    </location>
</feature>
<feature type="strand" evidence="10">
    <location>
        <begin position="78"/>
        <end position="82"/>
    </location>
</feature>
<feature type="strand" evidence="10">
    <location>
        <begin position="85"/>
        <end position="91"/>
    </location>
</feature>
<feature type="strand" evidence="10">
    <location>
        <begin position="106"/>
        <end position="111"/>
    </location>
</feature>
<feature type="strand" evidence="10">
    <location>
        <begin position="113"/>
        <end position="122"/>
    </location>
</feature>
<feature type="helix" evidence="10">
    <location>
        <begin position="125"/>
        <end position="135"/>
    </location>
</feature>
<feature type="helix" evidence="10">
    <location>
        <begin position="143"/>
        <end position="172"/>
    </location>
</feature>
<feature type="helix" evidence="10">
    <location>
        <begin position="186"/>
        <end position="211"/>
    </location>
</feature>
<feature type="helix" evidence="10">
    <location>
        <begin position="221"/>
        <end position="260"/>
    </location>
</feature>
<comment type="function">
    <text evidence="1 3">Zinc transporter (PubMed:12142406). Acts as a Zn(2+):proton symporter, which likely mediates zinc ion uptake (By similarity).</text>
</comment>
<comment type="catalytic activity">
    <reaction evidence="2">
        <text>Zn(2+)(out) + H(+)(out) = Zn(2+)(in) + H(+)(in)</text>
        <dbReference type="Rhea" id="RHEA:71195"/>
        <dbReference type="ChEBI" id="CHEBI:15378"/>
        <dbReference type="ChEBI" id="CHEBI:29105"/>
    </reaction>
    <physiologicalReaction direction="left-to-right" evidence="2">
        <dbReference type="Rhea" id="RHEA:71196"/>
    </physiologicalReaction>
</comment>
<comment type="subunit">
    <text evidence="5">Homopentamer (PubMed:21565704). Can assemble pentamers in the absence of the transmembrane regions (PubMed:21565704).</text>
</comment>
<comment type="interaction">
    <interactant intactId="EBI-15926489">
        <id>Q9EYX5</id>
    </interactant>
    <interactant intactId="EBI-15926489">
        <id>Q9EYX5</id>
        <label>zntB</label>
    </interactant>
    <organismsDiffer>false</organismsDiffer>
    <experiments>2</experiments>
</comment>
<comment type="subcellular location">
    <subcellularLocation>
        <location evidence="2 4">Cell inner membrane</location>
        <topology evidence="2 4">Multi-pass membrane protein</topology>
    </subcellularLocation>
</comment>
<comment type="domain">
    <text evidence="5">Forms a funnel-like structure. Contains three Zn(2+) binding sites, two of which could be involved in Zn(2+) transport.</text>
</comment>
<comment type="disruption phenotype">
    <text evidence="3">Disruption of the gene has a marked effect on resistance levels to zinc and cadmium, but does not significantly alter the sensitivities to cobalt, nickel or manganese.</text>
</comment>
<comment type="miscellaneous">
    <text evidence="7">A role in zinc efflux has been proposed by Worlock et al, but ZntB was later shown in E.coli to likely mediate zinc uptake, using a transport mechanism that does not resemble the one proposed for homologous CorA channels.</text>
</comment>
<comment type="similarity">
    <text evidence="2 7">Belongs to the CorA metal ion transporter (MIT) (TC 1.A.35) family.</text>
</comment>
<keyword id="KW-0002">3D-structure</keyword>
<keyword id="KW-0997">Cell inner membrane</keyword>
<keyword id="KW-1003">Cell membrane</keyword>
<keyword id="KW-0406">Ion transport</keyword>
<keyword id="KW-0472">Membrane</keyword>
<keyword id="KW-0479">Metal-binding</keyword>
<keyword id="KW-1185">Reference proteome</keyword>
<keyword id="KW-0812">Transmembrane</keyword>
<keyword id="KW-1133">Transmembrane helix</keyword>
<keyword id="KW-0813">Transport</keyword>
<keyword id="KW-0862">Zinc</keyword>
<protein>
    <recommendedName>
        <fullName evidence="2 7">Zinc transport protein ZntB</fullName>
    </recommendedName>
</protein>
<reference key="1">
    <citation type="journal article" date="2002" name="J. Bacteriol.">
        <title>ZntB is a novel Zn(2+) transporter in Salmonella enterica serovar Typhimurium.</title>
        <authorList>
            <person name="Worlock A.J."/>
            <person name="Smith R.L."/>
        </authorList>
    </citation>
    <scope>NUCLEOTIDE SEQUENCE [GENOMIC DNA]</scope>
    <scope>FUNCTION</scope>
    <scope>DISRUPTION PHENOTYPE</scope>
    <source>
        <strain>ATCC 14028s / SGSG 2262</strain>
    </source>
</reference>
<reference key="2">
    <citation type="journal article" date="2001" name="Nature">
        <title>Complete genome sequence of Salmonella enterica serovar Typhimurium LT2.</title>
        <authorList>
            <person name="McClelland M."/>
            <person name="Sanderson K.E."/>
            <person name="Spieth J."/>
            <person name="Clifton S.W."/>
            <person name="Latreille P."/>
            <person name="Courtney L."/>
            <person name="Porwollik S."/>
            <person name="Ali J."/>
            <person name="Dante M."/>
            <person name="Du F."/>
            <person name="Hou S."/>
            <person name="Layman D."/>
            <person name="Leonard S."/>
            <person name="Nguyen C."/>
            <person name="Scott K."/>
            <person name="Holmes A."/>
            <person name="Grewal N."/>
            <person name="Mulvaney E."/>
            <person name="Ryan E."/>
            <person name="Sun H."/>
            <person name="Florea L."/>
            <person name="Miller W."/>
            <person name="Stoneking T."/>
            <person name="Nhan M."/>
            <person name="Waterston R."/>
            <person name="Wilson R.K."/>
        </authorList>
    </citation>
    <scope>NUCLEOTIDE SEQUENCE [LARGE SCALE GENOMIC DNA]</scope>
    <source>
        <strain>LT2 / SGSC1412 / ATCC 700720</strain>
    </source>
</reference>
<reference key="3">
    <citation type="journal article" date="2003" name="J. Bacteriol.">
        <title>Membrane topology of the ZntB efflux system of Salmonella enterica serovar Typhimurium.</title>
        <authorList>
            <person name="Caldwell A.M."/>
            <person name="Smith R.L."/>
        </authorList>
    </citation>
    <scope>SUBCELLULAR LOCATION</scope>
    <scope>TOPOLOGY</scope>
</reference>
<reference evidence="8 9" key="4">
    <citation type="journal article" date="2011" name="Structure">
        <title>X-ray crystallography and isothermal titration calorimetry studies of the Salmonella zinc transporter ZntB.</title>
        <authorList>
            <person name="Wan Q."/>
            <person name="Ahmad M.F."/>
            <person name="Fairman J."/>
            <person name="Gorzelle B."/>
            <person name="de la Fuente M."/>
            <person name="Dealwis C."/>
            <person name="Maguire M.E."/>
        </authorList>
    </citation>
    <scope>X-RAY CRYSTALLOGRAPHY (2.30 ANGSTROMS) OF 1-262 IN COMPLEX WITH ZINC</scope>
    <scope>SUBUNIT</scope>
    <scope>DOMAIN</scope>
    <scope>MUTAGENESIS OF CYS-92; CYS-244 AND CYS-307</scope>
</reference>
<accession>Q9EYX5</accession>
<accession>Q7CQH1</accession>
<gene>
    <name evidence="2 6" type="primary">zntB</name>
    <name type="ordered locus">STM1656</name>
</gene>